<gene>
    <name type="primary">KAP4</name>
</gene>
<feature type="propeptide" id="PRO_0000409296" evidence="3">
    <location>
        <begin position="1"/>
        <end position="9"/>
    </location>
</feature>
<feature type="chain" id="PRO_0000409297" description="Kinetoplast-associated protein 1">
    <location>
        <begin position="10"/>
        <end position="151"/>
    </location>
</feature>
<feature type="region of interest" description="Disordered" evidence="2">
    <location>
        <begin position="13"/>
        <end position="151"/>
    </location>
</feature>
<feature type="compositionally biased region" description="Low complexity" evidence="2">
    <location>
        <begin position="15"/>
        <end position="49"/>
    </location>
</feature>
<feature type="compositionally biased region" description="Low complexity" evidence="2">
    <location>
        <begin position="70"/>
        <end position="91"/>
    </location>
</feature>
<feature type="compositionally biased region" description="Low complexity" evidence="2">
    <location>
        <begin position="101"/>
        <end position="111"/>
    </location>
</feature>
<feature type="compositionally biased region" description="Basic residues" evidence="2">
    <location>
        <begin position="112"/>
        <end position="151"/>
    </location>
</feature>
<organism>
    <name type="scientific">Crithidia fasciculata</name>
    <dbReference type="NCBI Taxonomy" id="5656"/>
    <lineage>
        <taxon>Eukaryota</taxon>
        <taxon>Discoba</taxon>
        <taxon>Euglenozoa</taxon>
        <taxon>Kinetoplastea</taxon>
        <taxon>Metakinetoplastina</taxon>
        <taxon>Trypanosomatida</taxon>
        <taxon>Trypanosomatidae</taxon>
        <taxon>Leishmaniinae</taxon>
        <taxon>Crithidia</taxon>
    </lineage>
</organism>
<dbReference type="EMBL" id="AF034951">
    <property type="protein sequence ID" value="AAC32801.1"/>
    <property type="molecule type" value="mRNA"/>
</dbReference>
<dbReference type="SMR" id="O61016"/>
<dbReference type="VEuPathDB" id="TriTrypDB:CFAC1_210045100"/>
<dbReference type="GO" id="GO:0020023">
    <property type="term" value="C:kinetoplast"/>
    <property type="evidence" value="ECO:0000314"/>
    <property type="project" value="UniProtKB"/>
</dbReference>
<dbReference type="GO" id="GO:0003677">
    <property type="term" value="F:DNA binding"/>
    <property type="evidence" value="ECO:0000314"/>
    <property type="project" value="UniProtKB"/>
</dbReference>
<proteinExistence type="evidence at protein level"/>
<name>KAP1_CRIFA</name>
<comment type="function">
    <text evidence="1">Histone H1-like DNA-binding protein involved in the organization and segregation of kinetoplast DNA (kDNA). The mitochondrial DNA of kinetoplastid protozoa consists of about 5,000 minicircles and 20 to 30 maxicircles. These circular DNAs are held together by catenation into a highly organized compact disk structure referred to as a kinetoplast DNA (kDNA) network. Binds preferentially to a specific fragment of minicircle DNA and is able to compact kDNA networks through DNA charge neutralization and condensation (By similarity).</text>
</comment>
<comment type="subunit">
    <text>Associates with the kinetoplast DNA network.</text>
</comment>
<comment type="subcellular location">
    <subcellularLocation>
        <location evidence="3 4">Mitochondrion matrix</location>
        <location evidence="3 4">Kinetoplast</location>
    </subcellularLocation>
</comment>
<comment type="induction">
    <text evidence="4">Present at a constant level throughout the cell cycle.</text>
</comment>
<comment type="similarity">
    <text evidence="5">Belongs to the KAP family.</text>
</comment>
<sequence>MLRVSVRSLVRKASSKAGSKAAVPAAAAAASAPLSPATSAASARAVPPVGESRVSIPPIPGVAAPRSHRAAAAPAKKAAAPKAAKAKTPAKASRKIKKAASKPSAPKQAAGKMRKAAGKAQRKIKAAARKAAPKKMAKSFGKKGAAKKAHK</sequence>
<keyword id="KW-0903">Direct protein sequencing</keyword>
<keyword id="KW-0238">DNA-binding</keyword>
<keyword id="KW-0419">Kinetoplast</keyword>
<keyword id="KW-0496">Mitochondrion</keyword>
<evidence type="ECO:0000250" key="1"/>
<evidence type="ECO:0000256" key="2">
    <source>
        <dbReference type="SAM" id="MobiDB-lite"/>
    </source>
</evidence>
<evidence type="ECO:0000269" key="3">
    <source>
    </source>
</evidence>
<evidence type="ECO:0000269" key="4">
    <source>
    </source>
</evidence>
<evidence type="ECO:0000305" key="5"/>
<accession>O61016</accession>
<reference key="1">
    <citation type="journal article" date="1998" name="Mol. Biochem. Parasitol.">
        <title>The Crithidia fasciculata KAP1 gene encodes a highly basic protein associated with kinetoplast DNA.</title>
        <authorList>
            <person name="Hines J.C."/>
            <person name="Ray D.S."/>
        </authorList>
    </citation>
    <scope>NUCLEOTIDE SEQUENCE [MRNA]</scope>
    <scope>INDUCTION</scope>
    <scope>SUBCELLULAR LOCATION</scope>
    <source>
        <strain>C1</strain>
    </source>
</reference>
<reference key="2">
    <citation type="journal article" date="1993" name="Proc. Natl. Acad. Sci. U.S.A.">
        <title>Isolation of proteins associated with kinetoplast DNA networks in vivo.</title>
        <authorList>
            <person name="Xu C."/>
            <person name="Ray D.S."/>
        </authorList>
    </citation>
    <scope>PROTEIN SEQUENCE OF 10-22</scope>
    <scope>DNA-BINDING</scope>
    <scope>SUBCELLULAR LOCATION</scope>
</reference>
<protein>
    <recommendedName>
        <fullName>Kinetoplast-associated protein 1</fullName>
    </recommendedName>
    <alternativeName>
        <fullName>Histone H1-like protein p21</fullName>
    </alternativeName>
</protein>